<sequence>MSTGTVVQVIGAVVDVEFPQDAVPQVYDALKIVGEGPCNGLVLEVQQQLGGGVVRTIAMGSSDGLRRGLEVVNSGSPITVPVGTATLGRIMNVLGEPIDEAGPIGEEERYVIHRTAPSYEDQSSSTELLETGIKVIDLVCPFAKGGKVGLFGGAGVGKTVNMMELINNIAKAHSGLSVFAGVGERTREGNDFYYEMKDSGVLDKVAMVYGQMNEPPGNRLRVALSGLTMAEKFRDEGRDVLLFVDNIYRYTLAGTEVSALLGRMPSAVGYQPTLAEEMGVLQERITSTKTGSITSVQAVYVPADDLTDPSPATTFAHLDATVVLSRQIASLGIYPAVDPLDSTSRQLDPLVVGQEHYDVANGVQTVLQRYKELKDIIAILGMDELSDEDKTTVFRARKIERFLSQPFFVAEVFTGSPGKYVSLKDTIRGFKGILNGEFDHLPEQAFYMVGSIDEVIEKANKKK</sequence>
<organism>
    <name type="scientific">Shewanella baltica (strain OS195)</name>
    <dbReference type="NCBI Taxonomy" id="399599"/>
    <lineage>
        <taxon>Bacteria</taxon>
        <taxon>Pseudomonadati</taxon>
        <taxon>Pseudomonadota</taxon>
        <taxon>Gammaproteobacteria</taxon>
        <taxon>Alteromonadales</taxon>
        <taxon>Shewanellaceae</taxon>
        <taxon>Shewanella</taxon>
    </lineage>
</organism>
<keyword id="KW-0066">ATP synthesis</keyword>
<keyword id="KW-0067">ATP-binding</keyword>
<keyword id="KW-0997">Cell inner membrane</keyword>
<keyword id="KW-1003">Cell membrane</keyword>
<keyword id="KW-0139">CF(1)</keyword>
<keyword id="KW-0375">Hydrogen ion transport</keyword>
<keyword id="KW-0406">Ion transport</keyword>
<keyword id="KW-0472">Membrane</keyword>
<keyword id="KW-0547">Nucleotide-binding</keyword>
<keyword id="KW-1278">Translocase</keyword>
<keyword id="KW-0813">Transport</keyword>
<evidence type="ECO:0000255" key="1">
    <source>
        <dbReference type="HAMAP-Rule" id="MF_01347"/>
    </source>
</evidence>
<comment type="function">
    <text evidence="1">Produces ATP from ADP in the presence of a proton gradient across the membrane. The catalytic sites are hosted primarily by the beta subunits.</text>
</comment>
<comment type="catalytic activity">
    <reaction evidence="1">
        <text>ATP + H2O + 4 H(+)(in) = ADP + phosphate + 5 H(+)(out)</text>
        <dbReference type="Rhea" id="RHEA:57720"/>
        <dbReference type="ChEBI" id="CHEBI:15377"/>
        <dbReference type="ChEBI" id="CHEBI:15378"/>
        <dbReference type="ChEBI" id="CHEBI:30616"/>
        <dbReference type="ChEBI" id="CHEBI:43474"/>
        <dbReference type="ChEBI" id="CHEBI:456216"/>
        <dbReference type="EC" id="7.1.2.2"/>
    </reaction>
</comment>
<comment type="subunit">
    <text evidence="1">F-type ATPases have 2 components, CF(1) - the catalytic core - and CF(0) - the membrane proton channel. CF(1) has five subunits: alpha(3), beta(3), gamma(1), delta(1), epsilon(1). CF(0) has three main subunits: a(1), b(2) and c(9-12). The alpha and beta chains form an alternating ring which encloses part of the gamma chain. CF(1) is attached to CF(0) by a central stalk formed by the gamma and epsilon chains, while a peripheral stalk is formed by the delta and b chains.</text>
</comment>
<comment type="subcellular location">
    <subcellularLocation>
        <location evidence="1">Cell inner membrane</location>
        <topology evidence="1">Peripheral membrane protein</topology>
    </subcellularLocation>
</comment>
<comment type="similarity">
    <text evidence="1">Belongs to the ATPase alpha/beta chains family.</text>
</comment>
<feature type="chain" id="PRO_1000086922" description="ATP synthase subunit beta">
    <location>
        <begin position="1"/>
        <end position="463"/>
    </location>
</feature>
<feature type="binding site" evidence="1">
    <location>
        <begin position="152"/>
        <end position="159"/>
    </location>
    <ligand>
        <name>ATP</name>
        <dbReference type="ChEBI" id="CHEBI:30616"/>
    </ligand>
</feature>
<reference key="1">
    <citation type="submission" date="2007-11" db="EMBL/GenBank/DDBJ databases">
        <title>Complete sequence of chromosome of Shewanella baltica OS195.</title>
        <authorList>
            <consortium name="US DOE Joint Genome Institute"/>
            <person name="Copeland A."/>
            <person name="Lucas S."/>
            <person name="Lapidus A."/>
            <person name="Barry K."/>
            <person name="Glavina del Rio T."/>
            <person name="Dalin E."/>
            <person name="Tice H."/>
            <person name="Pitluck S."/>
            <person name="Chain P."/>
            <person name="Malfatti S."/>
            <person name="Shin M."/>
            <person name="Vergez L."/>
            <person name="Schmutz J."/>
            <person name="Larimer F."/>
            <person name="Land M."/>
            <person name="Hauser L."/>
            <person name="Kyrpides N."/>
            <person name="Kim E."/>
            <person name="Brettar I."/>
            <person name="Rodrigues J."/>
            <person name="Konstantinidis K."/>
            <person name="Klappenbach J."/>
            <person name="Hofle M."/>
            <person name="Tiedje J."/>
            <person name="Richardson P."/>
        </authorList>
    </citation>
    <scope>NUCLEOTIDE SEQUENCE [LARGE SCALE GENOMIC DNA]</scope>
    <source>
        <strain>OS195</strain>
    </source>
</reference>
<name>ATPB_SHEB9</name>
<protein>
    <recommendedName>
        <fullName evidence="1">ATP synthase subunit beta</fullName>
        <ecNumber evidence="1">7.1.2.2</ecNumber>
    </recommendedName>
    <alternativeName>
        <fullName evidence="1">ATP synthase F1 sector subunit beta</fullName>
    </alternativeName>
    <alternativeName>
        <fullName evidence="1">F-ATPase subunit beta</fullName>
    </alternativeName>
</protein>
<dbReference type="EC" id="7.1.2.2" evidence="1"/>
<dbReference type="EMBL" id="CP000891">
    <property type="protein sequence ID" value="ABX51664.1"/>
    <property type="molecule type" value="Genomic_DNA"/>
</dbReference>
<dbReference type="RefSeq" id="WP_006083845.1">
    <property type="nucleotide sequence ID" value="NC_009997.1"/>
</dbReference>
<dbReference type="SMR" id="A9KX06"/>
<dbReference type="GeneID" id="11775069"/>
<dbReference type="KEGG" id="sbn:Sbal195_4507"/>
<dbReference type="HOGENOM" id="CLU_022398_0_2_6"/>
<dbReference type="Proteomes" id="UP000000770">
    <property type="component" value="Chromosome"/>
</dbReference>
<dbReference type="GO" id="GO:0005886">
    <property type="term" value="C:plasma membrane"/>
    <property type="evidence" value="ECO:0007669"/>
    <property type="project" value="UniProtKB-SubCell"/>
</dbReference>
<dbReference type="GO" id="GO:0045259">
    <property type="term" value="C:proton-transporting ATP synthase complex"/>
    <property type="evidence" value="ECO:0007669"/>
    <property type="project" value="UniProtKB-KW"/>
</dbReference>
<dbReference type="GO" id="GO:0005524">
    <property type="term" value="F:ATP binding"/>
    <property type="evidence" value="ECO:0007669"/>
    <property type="project" value="UniProtKB-UniRule"/>
</dbReference>
<dbReference type="GO" id="GO:0016887">
    <property type="term" value="F:ATP hydrolysis activity"/>
    <property type="evidence" value="ECO:0007669"/>
    <property type="project" value="InterPro"/>
</dbReference>
<dbReference type="GO" id="GO:0046933">
    <property type="term" value="F:proton-transporting ATP synthase activity, rotational mechanism"/>
    <property type="evidence" value="ECO:0007669"/>
    <property type="project" value="UniProtKB-UniRule"/>
</dbReference>
<dbReference type="CDD" id="cd18110">
    <property type="entry name" value="ATP-synt_F1_beta_C"/>
    <property type="match status" value="1"/>
</dbReference>
<dbReference type="CDD" id="cd18115">
    <property type="entry name" value="ATP-synt_F1_beta_N"/>
    <property type="match status" value="1"/>
</dbReference>
<dbReference type="CDD" id="cd01133">
    <property type="entry name" value="F1-ATPase_beta_CD"/>
    <property type="match status" value="1"/>
</dbReference>
<dbReference type="FunFam" id="1.10.1140.10:FF:000001">
    <property type="entry name" value="ATP synthase subunit beta"/>
    <property type="match status" value="1"/>
</dbReference>
<dbReference type="FunFam" id="2.40.10.170:FF:000003">
    <property type="entry name" value="ATP synthase subunit beta"/>
    <property type="match status" value="1"/>
</dbReference>
<dbReference type="FunFam" id="3.40.50.300:FF:000004">
    <property type="entry name" value="ATP synthase subunit beta"/>
    <property type="match status" value="1"/>
</dbReference>
<dbReference type="Gene3D" id="2.40.10.170">
    <property type="match status" value="1"/>
</dbReference>
<dbReference type="Gene3D" id="1.10.1140.10">
    <property type="entry name" value="Bovine Mitochondrial F1-atpase, Atp Synthase Beta Chain, Chain D, domain 3"/>
    <property type="match status" value="1"/>
</dbReference>
<dbReference type="Gene3D" id="3.40.50.300">
    <property type="entry name" value="P-loop containing nucleotide triphosphate hydrolases"/>
    <property type="match status" value="1"/>
</dbReference>
<dbReference type="HAMAP" id="MF_01347">
    <property type="entry name" value="ATP_synth_beta_bact"/>
    <property type="match status" value="1"/>
</dbReference>
<dbReference type="InterPro" id="IPR003593">
    <property type="entry name" value="AAA+_ATPase"/>
</dbReference>
<dbReference type="InterPro" id="IPR055190">
    <property type="entry name" value="ATP-synt_VA_C"/>
</dbReference>
<dbReference type="InterPro" id="IPR005722">
    <property type="entry name" value="ATP_synth_F1_bsu"/>
</dbReference>
<dbReference type="InterPro" id="IPR020003">
    <property type="entry name" value="ATPase_a/bsu_AS"/>
</dbReference>
<dbReference type="InterPro" id="IPR050053">
    <property type="entry name" value="ATPase_alpha/beta_chains"/>
</dbReference>
<dbReference type="InterPro" id="IPR004100">
    <property type="entry name" value="ATPase_F1/V1/A1_a/bsu_N"/>
</dbReference>
<dbReference type="InterPro" id="IPR036121">
    <property type="entry name" value="ATPase_F1/V1/A1_a/bsu_N_sf"/>
</dbReference>
<dbReference type="InterPro" id="IPR000194">
    <property type="entry name" value="ATPase_F1/V1/A1_a/bsu_nucl-bd"/>
</dbReference>
<dbReference type="InterPro" id="IPR024034">
    <property type="entry name" value="ATPase_F1/V1_b/a_C"/>
</dbReference>
<dbReference type="InterPro" id="IPR027417">
    <property type="entry name" value="P-loop_NTPase"/>
</dbReference>
<dbReference type="NCBIfam" id="TIGR01039">
    <property type="entry name" value="atpD"/>
    <property type="match status" value="1"/>
</dbReference>
<dbReference type="PANTHER" id="PTHR15184">
    <property type="entry name" value="ATP SYNTHASE"/>
    <property type="match status" value="1"/>
</dbReference>
<dbReference type="PANTHER" id="PTHR15184:SF71">
    <property type="entry name" value="ATP SYNTHASE SUBUNIT BETA, MITOCHONDRIAL"/>
    <property type="match status" value="1"/>
</dbReference>
<dbReference type="Pfam" id="PF00006">
    <property type="entry name" value="ATP-synt_ab"/>
    <property type="match status" value="1"/>
</dbReference>
<dbReference type="Pfam" id="PF02874">
    <property type="entry name" value="ATP-synt_ab_N"/>
    <property type="match status" value="1"/>
</dbReference>
<dbReference type="Pfam" id="PF22919">
    <property type="entry name" value="ATP-synt_VA_C"/>
    <property type="match status" value="1"/>
</dbReference>
<dbReference type="SMART" id="SM00382">
    <property type="entry name" value="AAA"/>
    <property type="match status" value="1"/>
</dbReference>
<dbReference type="SUPFAM" id="SSF47917">
    <property type="entry name" value="C-terminal domain of alpha and beta subunits of F1 ATP synthase"/>
    <property type="match status" value="1"/>
</dbReference>
<dbReference type="SUPFAM" id="SSF50615">
    <property type="entry name" value="N-terminal domain of alpha and beta subunits of F1 ATP synthase"/>
    <property type="match status" value="1"/>
</dbReference>
<dbReference type="SUPFAM" id="SSF52540">
    <property type="entry name" value="P-loop containing nucleoside triphosphate hydrolases"/>
    <property type="match status" value="1"/>
</dbReference>
<dbReference type="PROSITE" id="PS00152">
    <property type="entry name" value="ATPASE_ALPHA_BETA"/>
    <property type="match status" value="1"/>
</dbReference>
<proteinExistence type="inferred from homology"/>
<gene>
    <name evidence="1" type="primary">atpD</name>
    <name type="ordered locus">Sbal195_4507</name>
</gene>
<accession>A9KX06</accession>